<sequence>MVKKNDLFVDVSSHNGYDITGILEQMGTTNTIIKISESTTYLNPCLSAQVEQSNPIGFYHFARFGGDVAEAEREAQFFLDNVPMQVKYLVLDYEDDPSGDAQANTNACLRFMQMIADAGYKPIYYSYKPFTHDNVDYQQILAQFPNSLWIAGYGLNDGTANFEYFPSMDGIRWWQYSSNPFDKNIVLLDDEEDDKPKTAGTWKQDSKGWWFRRNNGSFPYNKWEKIGGVWYYFDSKGYCLTSEWLKDNEKWYYLKDNGAMATGWVLVGSEWYYMDDSGAMVTGWVKYKNNWYYMTNERGNMVSNEFIKSGKGWYFMNTNGELADNPSFTKEPDGLITVA</sequence>
<keyword id="KW-0002">3D-structure</keyword>
<keyword id="KW-0929">Antimicrobial</keyword>
<keyword id="KW-0081">Bacteriolytic enzyme</keyword>
<keyword id="KW-0326">Glycosidase</keyword>
<keyword id="KW-0378">Hydrolase</keyword>
<keyword id="KW-1185">Reference proteome</keyword>
<keyword id="KW-0677">Repeat</keyword>
<organismHost>
    <name type="scientific">Streptococcus pneumoniae</name>
    <dbReference type="NCBI Taxonomy" id="1313"/>
</organismHost>
<gene>
    <name type="primary">CPL1</name>
    <name type="synonym">22</name>
</gene>
<dbReference type="EC" id="3.2.1.17"/>
<dbReference type="EMBL" id="J03586">
    <property type="protein sequence ID" value="AAA32204.1"/>
    <property type="molecule type" value="Genomic_DNA"/>
</dbReference>
<dbReference type="EMBL" id="Z47794">
    <property type="protein sequence ID" value="CAA87744.1"/>
    <property type="molecule type" value="Genomic_DNA"/>
</dbReference>
<dbReference type="PIR" id="A31086">
    <property type="entry name" value="MUBPCP"/>
</dbReference>
<dbReference type="RefSeq" id="NP_044837.1">
    <property type="nucleotide sequence ID" value="NC_001825.1"/>
</dbReference>
<dbReference type="PDB" id="1H09">
    <property type="method" value="X-ray"/>
    <property type="resolution" value="2.10 A"/>
    <property type="chains" value="A=2-339"/>
</dbReference>
<dbReference type="PDB" id="1OBA">
    <property type="method" value="X-ray"/>
    <property type="resolution" value="2.45 A"/>
    <property type="chains" value="A=1-339"/>
</dbReference>
<dbReference type="PDB" id="2IXU">
    <property type="method" value="X-ray"/>
    <property type="resolution" value="2.28 A"/>
    <property type="chains" value="A=1-339"/>
</dbReference>
<dbReference type="PDB" id="2IXV">
    <property type="method" value="X-ray"/>
    <property type="resolution" value="1.96 A"/>
    <property type="chains" value="A=1-339"/>
</dbReference>
<dbReference type="PDB" id="2J8F">
    <property type="method" value="X-ray"/>
    <property type="resolution" value="1.84 A"/>
    <property type="chains" value="A=1-339"/>
</dbReference>
<dbReference type="PDB" id="2J8G">
    <property type="method" value="X-ray"/>
    <property type="resolution" value="1.69 A"/>
    <property type="chains" value="A=1-339"/>
</dbReference>
<dbReference type="PDBsum" id="1H09"/>
<dbReference type="PDBsum" id="1OBA"/>
<dbReference type="PDBsum" id="2IXU"/>
<dbReference type="PDBsum" id="2IXV"/>
<dbReference type="PDBsum" id="2J8F"/>
<dbReference type="PDBsum" id="2J8G"/>
<dbReference type="SMR" id="P15057"/>
<dbReference type="IntAct" id="P15057">
    <property type="interactions" value="1"/>
</dbReference>
<dbReference type="CAZy" id="GH25">
    <property type="family name" value="Glycoside Hydrolase Family 25"/>
</dbReference>
<dbReference type="GeneID" id="1261221"/>
<dbReference type="KEGG" id="vg:1261221"/>
<dbReference type="OrthoDB" id="5812at10239"/>
<dbReference type="EvolutionaryTrace" id="P15057"/>
<dbReference type="PRO" id="PR:P15057"/>
<dbReference type="Proteomes" id="UP000009089">
    <property type="component" value="Genome"/>
</dbReference>
<dbReference type="GO" id="GO:0003796">
    <property type="term" value="F:lysozyme activity"/>
    <property type="evidence" value="ECO:0000314"/>
    <property type="project" value="CACAO"/>
</dbReference>
<dbReference type="GO" id="GO:0016998">
    <property type="term" value="P:cell wall macromolecule catabolic process"/>
    <property type="evidence" value="ECO:0007669"/>
    <property type="project" value="InterPro"/>
</dbReference>
<dbReference type="GO" id="GO:0042742">
    <property type="term" value="P:defense response to bacterium"/>
    <property type="evidence" value="ECO:0007669"/>
    <property type="project" value="UniProtKB-KW"/>
</dbReference>
<dbReference type="GO" id="GO:0009253">
    <property type="term" value="P:peptidoglycan catabolic process"/>
    <property type="evidence" value="ECO:0007669"/>
    <property type="project" value="InterPro"/>
</dbReference>
<dbReference type="GO" id="GO:0044659">
    <property type="term" value="P:viral release from host cell by cytolysis"/>
    <property type="evidence" value="ECO:0000314"/>
    <property type="project" value="CACAO"/>
</dbReference>
<dbReference type="CDD" id="cd06415">
    <property type="entry name" value="GH25_Cpl1-like"/>
    <property type="match status" value="1"/>
</dbReference>
<dbReference type="FunFam" id="2.20.120.10:FF:000001">
    <property type="entry name" value="Lysozyme"/>
    <property type="match status" value="1"/>
</dbReference>
<dbReference type="FunFam" id="3.20.20.80:FF:000229">
    <property type="entry name" value="Lysozyme"/>
    <property type="match status" value="1"/>
</dbReference>
<dbReference type="Gene3D" id="2.10.270.10">
    <property type="entry name" value="Cholin Binding"/>
    <property type="match status" value="1"/>
</dbReference>
<dbReference type="Gene3D" id="3.20.20.80">
    <property type="entry name" value="Glycosidases"/>
    <property type="match status" value="1"/>
</dbReference>
<dbReference type="Gene3D" id="2.20.120.10">
    <property type="entry name" value="Multimodular pneumococcal cell wall endolysin, domain 3"/>
    <property type="match status" value="1"/>
</dbReference>
<dbReference type="InterPro" id="IPR018337">
    <property type="entry name" value="Cell_wall/Cho-bd_repeat"/>
</dbReference>
<dbReference type="InterPro" id="IPR002053">
    <property type="entry name" value="Glyco_hydro_25"/>
</dbReference>
<dbReference type="InterPro" id="IPR008270">
    <property type="entry name" value="Glyco_hydro_25_AS"/>
</dbReference>
<dbReference type="InterPro" id="IPR018077">
    <property type="entry name" value="Glyco_hydro_fam25_subgr"/>
</dbReference>
<dbReference type="InterPro" id="IPR017853">
    <property type="entry name" value="Glycoside_hydrolase_SF"/>
</dbReference>
<dbReference type="Pfam" id="PF01473">
    <property type="entry name" value="Choline_bind_1"/>
    <property type="match status" value="2"/>
</dbReference>
<dbReference type="Pfam" id="PF19127">
    <property type="entry name" value="Choline_bind_3"/>
    <property type="match status" value="1"/>
</dbReference>
<dbReference type="Pfam" id="PF01183">
    <property type="entry name" value="Glyco_hydro_25"/>
    <property type="match status" value="1"/>
</dbReference>
<dbReference type="SMART" id="SM00641">
    <property type="entry name" value="Glyco_25"/>
    <property type="match status" value="1"/>
</dbReference>
<dbReference type="SUPFAM" id="SSF51445">
    <property type="entry name" value="(Trans)glycosidases"/>
    <property type="match status" value="1"/>
</dbReference>
<dbReference type="SUPFAM" id="SSF69360">
    <property type="entry name" value="Cell wall binding repeat"/>
    <property type="match status" value="1"/>
</dbReference>
<dbReference type="PROSITE" id="PS51170">
    <property type="entry name" value="CW"/>
    <property type="match status" value="5"/>
</dbReference>
<dbReference type="PROSITE" id="PS00953">
    <property type="entry name" value="GLYCOSYL_HYDROL_F25_1"/>
    <property type="match status" value="1"/>
</dbReference>
<dbReference type="PROSITE" id="PS51904">
    <property type="entry name" value="GLYCOSYL_HYDROL_F25_2"/>
    <property type="match status" value="1"/>
</dbReference>
<comment type="function">
    <text>Responsible for the separation of the host daughter cells at the end of cell division and participates in the liberation of progeny bacteriophage into the medium. Strictly depends on the presence of choline-containing cell walls for activity.</text>
</comment>
<comment type="catalytic activity">
    <reaction>
        <text>Hydrolysis of (1-&gt;4)-beta-linkages between N-acetylmuramic acid and N-acetyl-D-glucosamine residues in a peptidoglycan and between N-acetyl-D-glucosamine residues in chitodextrins.</text>
        <dbReference type="EC" id="3.2.1.17"/>
    </reaction>
</comment>
<comment type="interaction">
    <interactant intactId="EBI-11615908">
        <id>P15057</id>
    </interactant>
    <interactant intactId="EBI-11615933">
        <id>P67413</id>
        <label>udk</label>
    </interactant>
    <organismsDiffer>true</organismsDiffer>
    <experiments>2</experiments>
</comment>
<comment type="domain">
    <text>The C-terminal domain comprising the repeats is involved in choline binding.</text>
</comment>
<comment type="similarity">
    <text evidence="1 4">Belongs to the glycosyl hydrolase 25 family.</text>
</comment>
<accession>P15057</accession>
<accession>Q38009</accession>
<protein>
    <recommendedName>
        <fullName>Lysozyme</fullName>
        <ecNumber>3.2.1.17</ecNumber>
    </recommendedName>
    <alternativeName>
        <fullName>CP-1 lysin</fullName>
    </alternativeName>
    <alternativeName>
        <fullName>Endolysin</fullName>
    </alternativeName>
    <alternativeName>
        <fullName>Muramidase</fullName>
    </alternativeName>
</protein>
<reference key="1">
    <citation type="journal article" date="1988" name="Proc. Natl. Acad. Sci. U.S.A.">
        <title>Molecular evolution of lytic enzymes of Streptococcus pneumoniae and its bacteriophages.</title>
        <authorList>
            <person name="Garcia E."/>
            <person name="Garcia J.L."/>
            <person name="Garcia P."/>
            <person name="Arraras A."/>
            <person name="Sanchez-Puelles J.M."/>
            <person name="Lopez R."/>
        </authorList>
    </citation>
    <scope>NUCLEOTIDE SEQUENCE [GENOMIC DNA]</scope>
</reference>
<reference key="2">
    <citation type="journal article" date="1996" name="J. Virol.">
        <title>Analysis of the complete nucleotide sequence and functional organization of the genome of Streptococcus pneumoniae bacteriophage Cp-1.</title>
        <authorList>
            <person name="Martin A.C."/>
            <person name="Lopez R."/>
            <person name="Garcia P."/>
        </authorList>
    </citation>
    <scope>NUCLEOTIDE SEQUENCE [LARGE SCALE GENOMIC DNA]</scope>
</reference>
<reference key="3">
    <citation type="journal article" date="1992" name="Biochemistry">
        <title>Role of Asp-9 and Glu-36 in the active site of the pneumococcal CPL1 lysozyme: an evolutionary perspective of lysozyme mechanism.</title>
        <authorList>
            <person name="Sanz J.M."/>
            <person name="Garcia P."/>
            <person name="Garcia J.L."/>
        </authorList>
    </citation>
    <scope>MUTAGENESIS OF ASP-10 AND GLU-37</scope>
</reference>
<reference key="4">
    <citation type="journal article" date="2003" name="Structure">
        <title>Structural basis for selective recognition of pneumococcal cell wall by modular endolysin from phage Cp-1.</title>
        <authorList>
            <person name="Hermoso J.A."/>
            <person name="Monterroso B."/>
            <person name="Albert A."/>
            <person name="Galan B."/>
            <person name="Ahrazem O."/>
            <person name="Garcia P."/>
            <person name="Martinez-Ripoll M."/>
            <person name="Garcia J.L."/>
            <person name="Menendez M."/>
        </authorList>
    </citation>
    <scope>X-RAY CRYSTALLOGRAPHY (2.1 ANGSTROMS) OF NATIVE PROTEIN AND COMPLEX WITH CHOLINE</scope>
    <scope>MUTAGENESIS OF ASP-92; GLU-94 AND ASP-182</scope>
</reference>
<evidence type="ECO:0000255" key="1">
    <source>
        <dbReference type="PROSITE-ProRule" id="PRU01252"/>
    </source>
</evidence>
<evidence type="ECO:0000269" key="2">
    <source>
    </source>
</evidence>
<evidence type="ECO:0000269" key="3">
    <source>
    </source>
</evidence>
<evidence type="ECO:0000305" key="4"/>
<evidence type="ECO:0007829" key="5">
    <source>
        <dbReference type="PDB" id="1H09"/>
    </source>
</evidence>
<evidence type="ECO:0007829" key="6">
    <source>
        <dbReference type="PDB" id="2J8G"/>
    </source>
</evidence>
<name>LYS_BPCP1</name>
<feature type="chain" id="PRO_0000208259" description="Lysozyme">
    <location>
        <begin position="1"/>
        <end position="339"/>
    </location>
</feature>
<feature type="domain" description="Ch-type lysozyme" evidence="1">
    <location>
        <begin position="5"/>
        <end position="206"/>
    </location>
</feature>
<feature type="repeat" description="Cell wall-binding 1">
    <location>
        <begin position="200"/>
        <end position="219"/>
    </location>
</feature>
<feature type="repeat" description="Cell wall-binding 2">
    <location>
        <begin position="220"/>
        <end position="239"/>
    </location>
</feature>
<feature type="repeat" description="Cell wall-binding 3">
    <location>
        <begin position="241"/>
        <end position="260"/>
    </location>
</feature>
<feature type="repeat" description="Cell wall-binding 4">
    <location>
        <begin position="261"/>
        <end position="280"/>
    </location>
</feature>
<feature type="repeat" description="Cell wall-binding 5">
    <location>
        <begin position="281"/>
        <end position="300"/>
    </location>
</feature>
<feature type="repeat" description="Cell wall-binding 6">
    <location>
        <begin position="303"/>
        <end position="322"/>
    </location>
</feature>
<feature type="active site" evidence="1">
    <location>
        <position position="10"/>
    </location>
</feature>
<feature type="active site" evidence="1">
    <location>
        <position position="92"/>
    </location>
</feature>
<feature type="active site" evidence="1">
    <location>
        <position position="94"/>
    </location>
</feature>
<feature type="mutagenesis site" description="Almost complete loss of activity." evidence="2">
    <original>D</original>
    <variation>A</variation>
    <variation>E</variation>
    <variation>H</variation>
    <variation>K</variation>
    <variation>N</variation>
    <location>
        <position position="10"/>
    </location>
</feature>
<feature type="mutagenesis site" description="95% loss of activity." evidence="2">
    <original>E</original>
    <variation>A</variation>
    <location>
        <position position="37"/>
    </location>
</feature>
<feature type="mutagenesis site" description="63% loss of activity." evidence="2">
    <original>E</original>
    <variation>D</variation>
    <location>
        <position position="37"/>
    </location>
</feature>
<feature type="mutagenesis site" description="Almost complete loss of activity." evidence="2">
    <original>E</original>
    <variation>K</variation>
    <location>
        <position position="37"/>
    </location>
</feature>
<feature type="mutagenesis site" description="13% loss of activity." evidence="2">
    <original>E</original>
    <variation>Q</variation>
    <location>
        <position position="37"/>
    </location>
</feature>
<feature type="mutagenesis site" description="Almost complete loss of activity." evidence="3">
    <original>D</original>
    <variation>A</variation>
    <location>
        <position position="92"/>
    </location>
</feature>
<feature type="mutagenesis site" description="Almost complete loss of activity." evidence="3">
    <original>E</original>
    <variation>A</variation>
    <variation>Q</variation>
    <location>
        <position position="94"/>
    </location>
</feature>
<feature type="mutagenesis site" description="Almost complete loss of activity." evidence="3">
    <original>D</original>
    <variation>A</variation>
    <location>
        <position position="182"/>
    </location>
</feature>
<feature type="sequence conflict" description="In Ref. 2; AAA32204." evidence="4" ref="2">
    <original>P</original>
    <variation>R</variation>
    <location>
        <position position="44"/>
    </location>
</feature>
<feature type="strand" evidence="6">
    <location>
        <begin position="7"/>
        <end position="11"/>
    </location>
</feature>
<feature type="helix" evidence="6">
    <location>
        <begin position="13"/>
        <end position="15"/>
    </location>
</feature>
<feature type="helix" evidence="6">
    <location>
        <begin position="20"/>
        <end position="26"/>
    </location>
</feature>
<feature type="strand" evidence="6">
    <location>
        <begin position="30"/>
        <end position="37"/>
    </location>
</feature>
<feature type="turn" evidence="6">
    <location>
        <begin position="38"/>
        <end position="40"/>
    </location>
</feature>
<feature type="helix" evidence="6">
    <location>
        <begin position="46"/>
        <end position="51"/>
    </location>
</feature>
<feature type="strand" evidence="6">
    <location>
        <begin position="53"/>
        <end position="61"/>
    </location>
</feature>
<feature type="helix" evidence="6">
    <location>
        <begin position="68"/>
        <end position="80"/>
    </location>
</feature>
<feature type="strand" evidence="6">
    <location>
        <begin position="87"/>
        <end position="92"/>
    </location>
</feature>
<feature type="helix" evidence="6">
    <location>
        <begin position="101"/>
        <end position="117"/>
    </location>
</feature>
<feature type="strand" evidence="6">
    <location>
        <begin position="120"/>
        <end position="127"/>
    </location>
</feature>
<feature type="helix" evidence="6">
    <location>
        <begin position="128"/>
        <end position="134"/>
    </location>
</feature>
<feature type="helix" evidence="6">
    <location>
        <begin position="137"/>
        <end position="143"/>
    </location>
</feature>
<feature type="strand" evidence="6">
    <location>
        <begin position="148"/>
        <end position="151"/>
    </location>
</feature>
<feature type="strand" evidence="6">
    <location>
        <begin position="157"/>
        <end position="159"/>
    </location>
</feature>
<feature type="helix" evidence="6">
    <location>
        <begin position="162"/>
        <end position="164"/>
    </location>
</feature>
<feature type="strand" evidence="6">
    <location>
        <begin position="171"/>
        <end position="177"/>
    </location>
</feature>
<feature type="strand" evidence="6">
    <location>
        <begin position="179"/>
        <end position="188"/>
    </location>
</feature>
<feature type="strand" evidence="6">
    <location>
        <begin position="200"/>
        <end position="204"/>
    </location>
</feature>
<feature type="strand" evidence="6">
    <location>
        <begin position="209"/>
        <end position="213"/>
    </location>
</feature>
<feature type="strand" evidence="6">
    <location>
        <begin position="221"/>
        <end position="226"/>
    </location>
</feature>
<feature type="strand" evidence="6">
    <location>
        <begin position="229"/>
        <end position="233"/>
    </location>
</feature>
<feature type="strand" evidence="6">
    <location>
        <begin position="242"/>
        <end position="247"/>
    </location>
</feature>
<feature type="strand" evidence="6">
    <location>
        <begin position="250"/>
        <end position="254"/>
    </location>
</feature>
<feature type="strand" evidence="6">
    <location>
        <begin position="263"/>
        <end position="267"/>
    </location>
</feature>
<feature type="strand" evidence="6">
    <location>
        <begin position="270"/>
        <end position="274"/>
    </location>
</feature>
<feature type="strand" evidence="6">
    <location>
        <begin position="283"/>
        <end position="287"/>
    </location>
</feature>
<feature type="strand" evidence="6">
    <location>
        <begin position="290"/>
        <end position="295"/>
    </location>
</feature>
<feature type="helix" evidence="6">
    <location>
        <begin position="297"/>
        <end position="299"/>
    </location>
</feature>
<feature type="strand" evidence="6">
    <location>
        <begin position="302"/>
        <end position="309"/>
    </location>
</feature>
<feature type="strand" evidence="6">
    <location>
        <begin position="312"/>
        <end position="316"/>
    </location>
</feature>
<feature type="turn" evidence="5">
    <location>
        <begin position="318"/>
        <end position="320"/>
    </location>
</feature>
<feature type="strand" evidence="6">
    <location>
        <begin position="327"/>
        <end position="330"/>
    </location>
</feature>
<feature type="strand" evidence="6">
    <location>
        <begin position="335"/>
        <end position="337"/>
    </location>
</feature>
<organism>
    <name type="scientific">Streptococcus phage Cp-1</name>
    <name type="common">Bacteriophage Cp-1</name>
    <dbReference type="NCBI Taxonomy" id="10747"/>
    <lineage>
        <taxon>Viruses</taxon>
        <taxon>Duplodnaviria</taxon>
        <taxon>Heunggongvirae</taxon>
        <taxon>Uroviricota</taxon>
        <taxon>Caudoviricetes</taxon>
        <taxon>Salasmaviridae</taxon>
        <taxon>Cepunavirus</taxon>
        <taxon>Cepunavirus Cp1</taxon>
    </lineage>
</organism>
<proteinExistence type="evidence at protein level"/>